<keyword id="KW-0143">Chaperone</keyword>
<keyword id="KW-0963">Cytoplasm</keyword>
<keyword id="KW-1015">Disulfide bond</keyword>
<keyword id="KW-0676">Redox-active center</keyword>
<keyword id="KW-0862">Zinc</keyword>
<proteinExistence type="inferred from homology"/>
<protein>
    <recommendedName>
        <fullName evidence="1">33 kDa chaperonin</fullName>
    </recommendedName>
    <alternativeName>
        <fullName evidence="1">Heat shock protein 33 homolog</fullName>
        <shortName evidence="1">HSP33</shortName>
    </alternativeName>
</protein>
<comment type="function">
    <text evidence="1">Redox regulated molecular chaperone. Protects both thermally unfolding and oxidatively damaged proteins from irreversible aggregation. Plays an important role in the bacterial defense system toward oxidative stress.</text>
</comment>
<comment type="subcellular location">
    <subcellularLocation>
        <location evidence="1">Cytoplasm</location>
    </subcellularLocation>
</comment>
<comment type="PTM">
    <text evidence="1">Under oxidizing conditions two disulfide bonds are formed involving the reactive cysteines. Under reducing conditions zinc is bound to the reactive cysteines and the protein is inactive.</text>
</comment>
<comment type="similarity">
    <text evidence="1">Belongs to the HSP33 family.</text>
</comment>
<accession>B7JK74</accession>
<name>HSLO_BACC0</name>
<dbReference type="EMBL" id="CP001283">
    <property type="protein sequence ID" value="ACK88604.1"/>
    <property type="molecule type" value="Genomic_DNA"/>
</dbReference>
<dbReference type="RefSeq" id="WP_000656366.1">
    <property type="nucleotide sequence ID" value="NC_011773.1"/>
</dbReference>
<dbReference type="SMR" id="B7JK74"/>
<dbReference type="GeneID" id="75083333"/>
<dbReference type="KEGG" id="bcu:BCAH820_0075"/>
<dbReference type="HOGENOM" id="CLU_054493_1_0_9"/>
<dbReference type="Proteomes" id="UP000001363">
    <property type="component" value="Chromosome"/>
</dbReference>
<dbReference type="GO" id="GO:0005737">
    <property type="term" value="C:cytoplasm"/>
    <property type="evidence" value="ECO:0007669"/>
    <property type="project" value="UniProtKB-SubCell"/>
</dbReference>
<dbReference type="GO" id="GO:0044183">
    <property type="term" value="F:protein folding chaperone"/>
    <property type="evidence" value="ECO:0007669"/>
    <property type="project" value="TreeGrafter"/>
</dbReference>
<dbReference type="GO" id="GO:0051082">
    <property type="term" value="F:unfolded protein binding"/>
    <property type="evidence" value="ECO:0007669"/>
    <property type="project" value="UniProtKB-UniRule"/>
</dbReference>
<dbReference type="GO" id="GO:0042026">
    <property type="term" value="P:protein refolding"/>
    <property type="evidence" value="ECO:0007669"/>
    <property type="project" value="TreeGrafter"/>
</dbReference>
<dbReference type="CDD" id="cd00498">
    <property type="entry name" value="Hsp33"/>
    <property type="match status" value="1"/>
</dbReference>
<dbReference type="Gene3D" id="3.55.30.10">
    <property type="entry name" value="Hsp33 domain"/>
    <property type="match status" value="1"/>
</dbReference>
<dbReference type="Gene3D" id="3.90.1280.10">
    <property type="entry name" value="HSP33 redox switch-like"/>
    <property type="match status" value="1"/>
</dbReference>
<dbReference type="HAMAP" id="MF_00117">
    <property type="entry name" value="HslO"/>
    <property type="match status" value="1"/>
</dbReference>
<dbReference type="InterPro" id="IPR000397">
    <property type="entry name" value="Heat_shock_Hsp33"/>
</dbReference>
<dbReference type="InterPro" id="IPR016154">
    <property type="entry name" value="Heat_shock_Hsp33_C"/>
</dbReference>
<dbReference type="InterPro" id="IPR016153">
    <property type="entry name" value="Heat_shock_Hsp33_N"/>
</dbReference>
<dbReference type="NCBIfam" id="NF001033">
    <property type="entry name" value="PRK00114.1"/>
    <property type="match status" value="1"/>
</dbReference>
<dbReference type="PANTHER" id="PTHR30111">
    <property type="entry name" value="33 KDA CHAPERONIN"/>
    <property type="match status" value="1"/>
</dbReference>
<dbReference type="PANTHER" id="PTHR30111:SF1">
    <property type="entry name" value="33 KDA CHAPERONIN"/>
    <property type="match status" value="1"/>
</dbReference>
<dbReference type="Pfam" id="PF01430">
    <property type="entry name" value="HSP33"/>
    <property type="match status" value="1"/>
</dbReference>
<dbReference type="PIRSF" id="PIRSF005261">
    <property type="entry name" value="Heat_shock_Hsp33"/>
    <property type="match status" value="1"/>
</dbReference>
<dbReference type="SUPFAM" id="SSF64397">
    <property type="entry name" value="Hsp33 domain"/>
    <property type="match status" value="1"/>
</dbReference>
<dbReference type="SUPFAM" id="SSF118352">
    <property type="entry name" value="HSP33 redox switch-like"/>
    <property type="match status" value="1"/>
</dbReference>
<reference key="1">
    <citation type="submission" date="2008-10" db="EMBL/GenBank/DDBJ databases">
        <title>Genome sequence of Bacillus cereus AH820.</title>
        <authorList>
            <person name="Dodson R.J."/>
            <person name="Durkin A.S."/>
            <person name="Rosovitz M.J."/>
            <person name="Rasko D.A."/>
            <person name="Hoffmaster A."/>
            <person name="Ravel J."/>
            <person name="Sutton G."/>
        </authorList>
    </citation>
    <scope>NUCLEOTIDE SEQUENCE [LARGE SCALE GENOMIC DNA]</scope>
    <source>
        <strain>AH820</strain>
    </source>
</reference>
<evidence type="ECO:0000255" key="1">
    <source>
        <dbReference type="HAMAP-Rule" id="MF_00117"/>
    </source>
</evidence>
<gene>
    <name evidence="1" type="primary">hslO</name>
    <name type="ordered locus">BCAH820_0075</name>
</gene>
<feature type="chain" id="PRO_1000190453" description="33 kDa chaperonin">
    <location>
        <begin position="1"/>
        <end position="291"/>
    </location>
</feature>
<feature type="disulfide bond" description="Redox-active" evidence="1">
    <location>
        <begin position="237"/>
        <end position="239"/>
    </location>
</feature>
<feature type="disulfide bond" description="Redox-active" evidence="1">
    <location>
        <begin position="270"/>
        <end position="273"/>
    </location>
</feature>
<sequence length="291" mass="32058">MKDYLVKALAFDGEVRAYSVRTTNTVSEAQRRHDTWRTASAALGRSLTAGTMMGAMLKGDQKLTIKVEGNGPIGPILVDAHANGDVRGYVTNPHVDFEGTEQGKLRVYQAVGTEGFVTVIKDIGMREPFIGQSPIVSGELGEDFTYYFAVSEQTPSSVGVGVLVNGDDSILAAGGFILQIMPGAQEETISFIEERLQKIPPVSTLIEQGLSPEELLYAVLGEDKVKVLETMDVQFNCTCSRERIESVLISLGKTELEQVREEEEETEVHCHFCNERYKFSKEDITNLIENL</sequence>
<organism>
    <name type="scientific">Bacillus cereus (strain AH820)</name>
    <dbReference type="NCBI Taxonomy" id="405535"/>
    <lineage>
        <taxon>Bacteria</taxon>
        <taxon>Bacillati</taxon>
        <taxon>Bacillota</taxon>
        <taxon>Bacilli</taxon>
        <taxon>Bacillales</taxon>
        <taxon>Bacillaceae</taxon>
        <taxon>Bacillus</taxon>
        <taxon>Bacillus cereus group</taxon>
    </lineage>
</organism>